<protein>
    <recommendedName>
        <fullName evidence="1">3-dehydroquinate dehydratase</fullName>
        <shortName evidence="1">3-dehydroquinase</shortName>
        <ecNumber evidence="1">4.2.1.10</ecNumber>
    </recommendedName>
    <alternativeName>
        <fullName evidence="1">Type I DHQase</fullName>
    </alternativeName>
    <alternativeName>
        <fullName evidence="1">Type I dehydroquinase</fullName>
        <shortName evidence="1">DHQ1</shortName>
    </alternativeName>
</protein>
<keyword id="KW-0028">Amino-acid biosynthesis</keyword>
<keyword id="KW-0057">Aromatic amino acid biosynthesis</keyword>
<keyword id="KW-0456">Lyase</keyword>
<keyword id="KW-0704">Schiff base</keyword>
<accession>Q8PXE7</accession>
<name>AROD_METMA</name>
<organism>
    <name type="scientific">Methanosarcina mazei (strain ATCC BAA-159 / DSM 3647 / Goe1 / Go1 / JCM 11833 / OCM 88)</name>
    <name type="common">Methanosarcina frisia</name>
    <dbReference type="NCBI Taxonomy" id="192952"/>
    <lineage>
        <taxon>Archaea</taxon>
        <taxon>Methanobacteriati</taxon>
        <taxon>Methanobacteriota</taxon>
        <taxon>Stenosarchaea group</taxon>
        <taxon>Methanomicrobia</taxon>
        <taxon>Methanosarcinales</taxon>
        <taxon>Methanosarcinaceae</taxon>
        <taxon>Methanosarcina</taxon>
    </lineage>
</organism>
<feature type="chain" id="PRO_0000138831" description="3-dehydroquinate dehydratase">
    <location>
        <begin position="1"/>
        <end position="242"/>
    </location>
</feature>
<feature type="active site" description="Proton donor/acceptor" evidence="1">
    <location>
        <position position="135"/>
    </location>
</feature>
<feature type="active site" description="Schiff-base intermediate with substrate" evidence="1">
    <location>
        <position position="162"/>
    </location>
</feature>
<feature type="binding site" evidence="1">
    <location>
        <begin position="39"/>
        <end position="41"/>
    </location>
    <ligand>
        <name>3-dehydroquinate</name>
        <dbReference type="ChEBI" id="CHEBI:32364"/>
    </ligand>
</feature>
<feature type="binding site" evidence="1">
    <location>
        <position position="73"/>
    </location>
    <ligand>
        <name>3-dehydroquinate</name>
        <dbReference type="ChEBI" id="CHEBI:32364"/>
    </ligand>
</feature>
<feature type="binding site" evidence="1">
    <location>
        <position position="203"/>
    </location>
    <ligand>
        <name>3-dehydroquinate</name>
        <dbReference type="ChEBI" id="CHEBI:32364"/>
    </ligand>
</feature>
<feature type="binding site" evidence="1">
    <location>
        <position position="228"/>
    </location>
    <ligand>
        <name>3-dehydroquinate</name>
        <dbReference type="ChEBI" id="CHEBI:32364"/>
    </ligand>
</feature>
<gene>
    <name evidence="1" type="primary">aroD</name>
    <name type="ordered locus">MM_1273</name>
</gene>
<comment type="function">
    <text evidence="1">Involved in the third step of the chorismate pathway, which leads to the biosynthesis of aromatic amino acids. Catalyzes the cis-dehydration of 3-dehydroquinate (DHQ) and introduces the first double bond of the aromatic ring to yield 3-dehydroshikimate.</text>
</comment>
<comment type="catalytic activity">
    <reaction evidence="1">
        <text>3-dehydroquinate = 3-dehydroshikimate + H2O</text>
        <dbReference type="Rhea" id="RHEA:21096"/>
        <dbReference type="ChEBI" id="CHEBI:15377"/>
        <dbReference type="ChEBI" id="CHEBI:16630"/>
        <dbReference type="ChEBI" id="CHEBI:32364"/>
        <dbReference type="EC" id="4.2.1.10"/>
    </reaction>
</comment>
<comment type="pathway">
    <text evidence="1">Metabolic intermediate biosynthesis; chorismate biosynthesis; chorismate from D-erythrose 4-phosphate and phosphoenolpyruvate: step 3/7.</text>
</comment>
<comment type="subunit">
    <text evidence="1">Homodimer.</text>
</comment>
<comment type="similarity">
    <text evidence="1">Belongs to the type-I 3-dehydroquinase family.</text>
</comment>
<proteinExistence type="inferred from homology"/>
<sequence length="242" mass="26152">MTQIGSFDLEKKTAVVAVILEKPLENSKKAAEKGADILEIRLDLLGIRTPERAAEVIREIKAETGIPIIVTSRSGAEGGKWDGKEEDRTGLLINLLSLKDGPDAIDIELSAGMKERNRVIKAAKDRETAVIVSSHDFLKTPPLQNMRTIIEEMFLAGADIAKLAVMPLSVGDTLNLLRVTLDFKDAGKSVCTIAMGSQGKHTRVVAPFYGSVLTYASIESNASAAPGQLPVDEVKKIMEMLK</sequence>
<reference key="1">
    <citation type="journal article" date="2002" name="J. Mol. Microbiol. Biotechnol.">
        <title>The genome of Methanosarcina mazei: evidence for lateral gene transfer between Bacteria and Archaea.</title>
        <authorList>
            <person name="Deppenmeier U."/>
            <person name="Johann A."/>
            <person name="Hartsch T."/>
            <person name="Merkl R."/>
            <person name="Schmitz R.A."/>
            <person name="Martinez-Arias R."/>
            <person name="Henne A."/>
            <person name="Wiezer A."/>
            <person name="Baeumer S."/>
            <person name="Jacobi C."/>
            <person name="Brueggemann H."/>
            <person name="Lienard T."/>
            <person name="Christmann A."/>
            <person name="Boemecke M."/>
            <person name="Steckel S."/>
            <person name="Bhattacharyya A."/>
            <person name="Lykidis A."/>
            <person name="Overbeek R."/>
            <person name="Klenk H.-P."/>
            <person name="Gunsalus R.P."/>
            <person name="Fritz H.-J."/>
            <person name="Gottschalk G."/>
        </authorList>
    </citation>
    <scope>NUCLEOTIDE SEQUENCE [LARGE SCALE GENOMIC DNA]</scope>
    <source>
        <strain>ATCC BAA-159 / DSM 3647 / Goe1 / Go1 / JCM 11833 / OCM 88</strain>
    </source>
</reference>
<dbReference type="EC" id="4.2.1.10" evidence="1"/>
<dbReference type="EMBL" id="AE008384">
    <property type="protein sequence ID" value="AAM30969.1"/>
    <property type="molecule type" value="Genomic_DNA"/>
</dbReference>
<dbReference type="RefSeq" id="WP_011033220.1">
    <property type="nucleotide sequence ID" value="NC_003901.1"/>
</dbReference>
<dbReference type="SMR" id="Q8PXE7"/>
<dbReference type="GeneID" id="82160308"/>
<dbReference type="KEGG" id="mma:MM_1273"/>
<dbReference type="PATRIC" id="fig|192952.21.peg.1480"/>
<dbReference type="eggNOG" id="arCOG02097">
    <property type="taxonomic scope" value="Archaea"/>
</dbReference>
<dbReference type="HOGENOM" id="CLU_064444_2_1_2"/>
<dbReference type="UniPathway" id="UPA00053">
    <property type="reaction ID" value="UER00086"/>
</dbReference>
<dbReference type="Proteomes" id="UP000000595">
    <property type="component" value="Chromosome"/>
</dbReference>
<dbReference type="GO" id="GO:0003855">
    <property type="term" value="F:3-dehydroquinate dehydratase activity"/>
    <property type="evidence" value="ECO:0007669"/>
    <property type="project" value="UniProtKB-UniRule"/>
</dbReference>
<dbReference type="GO" id="GO:0046279">
    <property type="term" value="P:3,4-dihydroxybenzoate biosynthetic process"/>
    <property type="evidence" value="ECO:0007669"/>
    <property type="project" value="TreeGrafter"/>
</dbReference>
<dbReference type="GO" id="GO:0008652">
    <property type="term" value="P:amino acid biosynthetic process"/>
    <property type="evidence" value="ECO:0007669"/>
    <property type="project" value="UniProtKB-KW"/>
</dbReference>
<dbReference type="GO" id="GO:0009073">
    <property type="term" value="P:aromatic amino acid family biosynthetic process"/>
    <property type="evidence" value="ECO:0007669"/>
    <property type="project" value="UniProtKB-KW"/>
</dbReference>
<dbReference type="GO" id="GO:0009423">
    <property type="term" value="P:chorismate biosynthetic process"/>
    <property type="evidence" value="ECO:0007669"/>
    <property type="project" value="UniProtKB-UniRule"/>
</dbReference>
<dbReference type="CDD" id="cd00502">
    <property type="entry name" value="DHQase_I"/>
    <property type="match status" value="1"/>
</dbReference>
<dbReference type="FunFam" id="3.20.20.70:FF:000290">
    <property type="entry name" value="3-dehydroquinate dehydratase"/>
    <property type="match status" value="1"/>
</dbReference>
<dbReference type="Gene3D" id="3.20.20.70">
    <property type="entry name" value="Aldolase class I"/>
    <property type="match status" value="1"/>
</dbReference>
<dbReference type="HAMAP" id="MF_00214">
    <property type="entry name" value="AroD"/>
    <property type="match status" value="1"/>
</dbReference>
<dbReference type="InterPro" id="IPR013785">
    <property type="entry name" value="Aldolase_TIM"/>
</dbReference>
<dbReference type="InterPro" id="IPR001381">
    <property type="entry name" value="DHquinase_I"/>
</dbReference>
<dbReference type="InterPro" id="IPR050146">
    <property type="entry name" value="Type-I_3-dehydroquinase"/>
</dbReference>
<dbReference type="NCBIfam" id="TIGR01093">
    <property type="entry name" value="aroD"/>
    <property type="match status" value="1"/>
</dbReference>
<dbReference type="PANTHER" id="PTHR43699">
    <property type="entry name" value="3-DEHYDROQUINATE DEHYDRATASE"/>
    <property type="match status" value="1"/>
</dbReference>
<dbReference type="PANTHER" id="PTHR43699:SF1">
    <property type="entry name" value="3-DEHYDROQUINATE DEHYDRATASE"/>
    <property type="match status" value="1"/>
</dbReference>
<dbReference type="Pfam" id="PF01487">
    <property type="entry name" value="DHquinase_I"/>
    <property type="match status" value="1"/>
</dbReference>
<dbReference type="SUPFAM" id="SSF51569">
    <property type="entry name" value="Aldolase"/>
    <property type="match status" value="1"/>
</dbReference>
<evidence type="ECO:0000255" key="1">
    <source>
        <dbReference type="HAMAP-Rule" id="MF_00214"/>
    </source>
</evidence>